<keyword id="KW-0963">Cytoplasm</keyword>
<keyword id="KW-1185">Reference proteome</keyword>
<keyword id="KW-0694">RNA-binding</keyword>
<dbReference type="EMBL" id="BX294141">
    <property type="protein sequence ID" value="CAD78141.1"/>
    <property type="status" value="ALT_INIT"/>
    <property type="molecule type" value="Genomic_DNA"/>
</dbReference>
<dbReference type="RefSeq" id="NP_866360.1">
    <property type="nucleotide sequence ID" value="NC_005027.1"/>
</dbReference>
<dbReference type="RefSeq" id="WP_011120141.1">
    <property type="nucleotide sequence ID" value="NC_005027.1"/>
</dbReference>
<dbReference type="SMR" id="Q7UH38"/>
<dbReference type="FunCoup" id="Q7UH38">
    <property type="interactions" value="407"/>
</dbReference>
<dbReference type="STRING" id="243090.RB4867"/>
<dbReference type="EnsemblBacteria" id="CAD78141">
    <property type="protein sequence ID" value="CAD78141"/>
    <property type="gene ID" value="RB4867"/>
</dbReference>
<dbReference type="KEGG" id="rba:RB4867"/>
<dbReference type="PATRIC" id="fig|243090.15.peg.2306"/>
<dbReference type="eggNOG" id="COG0691">
    <property type="taxonomic scope" value="Bacteria"/>
</dbReference>
<dbReference type="HOGENOM" id="CLU_108953_0_1_0"/>
<dbReference type="InParanoid" id="Q7UH38"/>
<dbReference type="OrthoDB" id="9805462at2"/>
<dbReference type="Proteomes" id="UP000001025">
    <property type="component" value="Chromosome"/>
</dbReference>
<dbReference type="GO" id="GO:0005829">
    <property type="term" value="C:cytosol"/>
    <property type="evidence" value="ECO:0000318"/>
    <property type="project" value="GO_Central"/>
</dbReference>
<dbReference type="GO" id="GO:0003723">
    <property type="term" value="F:RNA binding"/>
    <property type="evidence" value="ECO:0000318"/>
    <property type="project" value="GO_Central"/>
</dbReference>
<dbReference type="GO" id="GO:0070929">
    <property type="term" value="P:trans-translation"/>
    <property type="evidence" value="ECO:0007669"/>
    <property type="project" value="UniProtKB-UniRule"/>
</dbReference>
<dbReference type="CDD" id="cd09294">
    <property type="entry name" value="SmpB"/>
    <property type="match status" value="1"/>
</dbReference>
<dbReference type="Gene3D" id="2.40.280.10">
    <property type="match status" value="1"/>
</dbReference>
<dbReference type="HAMAP" id="MF_00023">
    <property type="entry name" value="SmpB"/>
    <property type="match status" value="1"/>
</dbReference>
<dbReference type="InterPro" id="IPR023620">
    <property type="entry name" value="SmpB"/>
</dbReference>
<dbReference type="InterPro" id="IPR000037">
    <property type="entry name" value="SsrA-bd_prot"/>
</dbReference>
<dbReference type="InterPro" id="IPR020081">
    <property type="entry name" value="SsrA-bd_prot_CS"/>
</dbReference>
<dbReference type="NCBIfam" id="NF003843">
    <property type="entry name" value="PRK05422.1"/>
    <property type="match status" value="1"/>
</dbReference>
<dbReference type="NCBIfam" id="TIGR00086">
    <property type="entry name" value="smpB"/>
    <property type="match status" value="1"/>
</dbReference>
<dbReference type="PANTHER" id="PTHR30308:SF2">
    <property type="entry name" value="SSRA-BINDING PROTEIN"/>
    <property type="match status" value="1"/>
</dbReference>
<dbReference type="PANTHER" id="PTHR30308">
    <property type="entry name" value="TMRNA-BINDING COMPONENT OF TRANS-TRANSLATION TAGGING COMPLEX"/>
    <property type="match status" value="1"/>
</dbReference>
<dbReference type="Pfam" id="PF01668">
    <property type="entry name" value="SmpB"/>
    <property type="match status" value="1"/>
</dbReference>
<dbReference type="SUPFAM" id="SSF74982">
    <property type="entry name" value="Small protein B (SmpB)"/>
    <property type="match status" value="1"/>
</dbReference>
<dbReference type="PROSITE" id="PS01317">
    <property type="entry name" value="SSRP"/>
    <property type="match status" value="1"/>
</dbReference>
<comment type="function">
    <text evidence="1">Required for rescue of stalled ribosomes mediated by trans-translation. Binds to transfer-messenger RNA (tmRNA), required for stable association of tmRNA with ribosomes. tmRNA and SmpB together mimic tRNA shape, replacing the anticodon stem-loop with SmpB. tmRNA is encoded by the ssrA gene; the 2 termini fold to resemble tRNA(Ala) and it encodes a 'tag peptide', a short internal open reading frame. During trans-translation Ala-aminoacylated tmRNA acts like a tRNA, entering the A-site of stalled ribosomes, displacing the stalled mRNA. The ribosome then switches to translate the ORF on the tmRNA; the nascent peptide is terminated with the 'tag peptide' encoded by the tmRNA and targeted for degradation. The ribosome is freed to recommence translation, which seems to be the essential function of trans-translation.</text>
</comment>
<comment type="subcellular location">
    <subcellularLocation>
        <location evidence="1">Cytoplasm</location>
    </subcellularLocation>
    <text evidence="1">The tmRNA-SmpB complex associates with stalled 70S ribosomes.</text>
</comment>
<comment type="similarity">
    <text evidence="1">Belongs to the SmpB family.</text>
</comment>
<comment type="sequence caution" evidence="3">
    <conflict type="erroneous initiation">
        <sequence resource="EMBL-CDS" id="CAD78141"/>
    </conflict>
    <text>Extended N-terminus.</text>
</comment>
<protein>
    <recommendedName>
        <fullName evidence="1">SsrA-binding protein</fullName>
    </recommendedName>
    <alternativeName>
        <fullName evidence="1">Small protein B</fullName>
    </alternativeName>
</protein>
<name>SSRP_RHOBA</name>
<evidence type="ECO:0000255" key="1">
    <source>
        <dbReference type="HAMAP-Rule" id="MF_00023"/>
    </source>
</evidence>
<evidence type="ECO:0000256" key="2">
    <source>
        <dbReference type="SAM" id="MobiDB-lite"/>
    </source>
</evidence>
<evidence type="ECO:0000305" key="3"/>
<sequence length="176" mass="19934">MTEAGAKKAAGKKSGKGKGKNAKKNQPNITPVAENRKAKFRYEILDSVECGMMLMGSEVKSMREGKLSLDEAHIRVTNGELWLVGSDIAHYNNAGMWNHDPRRPRKLLVHAKEFDKFAGRAFERGLTLIPLRVYFSERGLAKCVMGLVKGKKLHDKRETIKKRESDRGLQRAMRRK</sequence>
<feature type="chain" id="PRO_0000103014" description="SsrA-binding protein">
    <location>
        <begin position="1"/>
        <end position="176"/>
    </location>
</feature>
<feature type="region of interest" description="Disordered" evidence="2">
    <location>
        <begin position="1"/>
        <end position="33"/>
    </location>
</feature>
<feature type="compositionally biased region" description="Basic residues" evidence="2">
    <location>
        <begin position="9"/>
        <end position="23"/>
    </location>
</feature>
<proteinExistence type="inferred from homology"/>
<reference key="1">
    <citation type="journal article" date="2003" name="Proc. Natl. Acad. Sci. U.S.A.">
        <title>Complete genome sequence of the marine planctomycete Pirellula sp. strain 1.</title>
        <authorList>
            <person name="Gloeckner F.O."/>
            <person name="Kube M."/>
            <person name="Bauer M."/>
            <person name="Teeling H."/>
            <person name="Lombardot T."/>
            <person name="Ludwig W."/>
            <person name="Gade D."/>
            <person name="Beck A."/>
            <person name="Borzym K."/>
            <person name="Heitmann K."/>
            <person name="Rabus R."/>
            <person name="Schlesner H."/>
            <person name="Amann R."/>
            <person name="Reinhardt R."/>
        </authorList>
    </citation>
    <scope>NUCLEOTIDE SEQUENCE [LARGE SCALE GENOMIC DNA]</scope>
    <source>
        <strain>DSM 10527 / NCIMB 13988 / SH1</strain>
    </source>
</reference>
<gene>
    <name evidence="1" type="primary">smpB</name>
    <name type="ordered locus">RB4867</name>
</gene>
<accession>Q7UH38</accession>
<organism>
    <name type="scientific">Rhodopirellula baltica (strain DSM 10527 / NCIMB 13988 / SH1)</name>
    <dbReference type="NCBI Taxonomy" id="243090"/>
    <lineage>
        <taxon>Bacteria</taxon>
        <taxon>Pseudomonadati</taxon>
        <taxon>Planctomycetota</taxon>
        <taxon>Planctomycetia</taxon>
        <taxon>Pirellulales</taxon>
        <taxon>Pirellulaceae</taxon>
        <taxon>Rhodopirellula</taxon>
    </lineage>
</organism>